<name>S6A17_HUMAN</name>
<dbReference type="EMBL" id="AK289982">
    <property type="protein sequence ID" value="BAF82671.1"/>
    <property type="molecule type" value="mRNA"/>
</dbReference>
<dbReference type="EMBL" id="AL355990">
    <property type="status" value="NOT_ANNOTATED_CDS"/>
    <property type="molecule type" value="Genomic_DNA"/>
</dbReference>
<dbReference type="EMBL" id="AL137790">
    <property type="status" value="NOT_ANNOTATED_CDS"/>
    <property type="molecule type" value="Genomic_DNA"/>
</dbReference>
<dbReference type="EMBL" id="BC140908">
    <property type="protein sequence ID" value="AAI40909.1"/>
    <property type="molecule type" value="mRNA"/>
</dbReference>
<dbReference type="CCDS" id="CCDS30799.1"/>
<dbReference type="RefSeq" id="NP_001010898.1">
    <property type="nucleotide sequence ID" value="NM_001010898.4"/>
</dbReference>
<dbReference type="RefSeq" id="XP_006710706.1">
    <property type="nucleotide sequence ID" value="XM_006710643.2"/>
</dbReference>
<dbReference type="SMR" id="Q9H1V8"/>
<dbReference type="BioGRID" id="132799">
    <property type="interactions" value="5"/>
</dbReference>
<dbReference type="FunCoup" id="Q9H1V8">
    <property type="interactions" value="14"/>
</dbReference>
<dbReference type="IntAct" id="Q9H1V8">
    <property type="interactions" value="1"/>
</dbReference>
<dbReference type="STRING" id="9606.ENSP00000330199"/>
<dbReference type="TCDB" id="2.A.22.6.6">
    <property type="family name" value="the neurotransmitter:sodium symporter (nss) family"/>
</dbReference>
<dbReference type="GlyCosmos" id="Q9H1V8">
    <property type="glycosylation" value="2 sites, No reported glycans"/>
</dbReference>
<dbReference type="GlyGen" id="Q9H1V8">
    <property type="glycosylation" value="4 sites, 2 N-linked glycans (2 sites), 1 O-linked glycan (2 sites)"/>
</dbReference>
<dbReference type="iPTMnet" id="Q9H1V8"/>
<dbReference type="PhosphoSitePlus" id="Q9H1V8"/>
<dbReference type="SwissPalm" id="Q9H1V8"/>
<dbReference type="BioMuta" id="SLC6A17"/>
<dbReference type="DMDM" id="59800227"/>
<dbReference type="jPOST" id="Q9H1V8"/>
<dbReference type="MassIVE" id="Q9H1V8"/>
<dbReference type="PaxDb" id="9606-ENSP00000330199"/>
<dbReference type="PeptideAtlas" id="Q9H1V8"/>
<dbReference type="ProteomicsDB" id="80449"/>
<dbReference type="Antibodypedia" id="1942">
    <property type="antibodies" value="90 antibodies from 20 providers"/>
</dbReference>
<dbReference type="DNASU" id="388662"/>
<dbReference type="Ensembl" id="ENST00000331565.5">
    <property type="protein sequence ID" value="ENSP00000330199.3"/>
    <property type="gene ID" value="ENSG00000197106.7"/>
</dbReference>
<dbReference type="GeneID" id="388662"/>
<dbReference type="KEGG" id="hsa:388662"/>
<dbReference type="MANE-Select" id="ENST00000331565.5">
    <property type="protein sequence ID" value="ENSP00000330199.3"/>
    <property type="RefSeq nucleotide sequence ID" value="NM_001010898.4"/>
    <property type="RefSeq protein sequence ID" value="NP_001010898.1"/>
</dbReference>
<dbReference type="UCSC" id="uc009wfq.4">
    <property type="organism name" value="human"/>
</dbReference>
<dbReference type="AGR" id="HGNC:31399"/>
<dbReference type="CTD" id="388662"/>
<dbReference type="DisGeNET" id="388662"/>
<dbReference type="GeneCards" id="SLC6A17"/>
<dbReference type="HGNC" id="HGNC:31399">
    <property type="gene designation" value="SLC6A17"/>
</dbReference>
<dbReference type="HPA" id="ENSG00000197106">
    <property type="expression patterns" value="Group enriched (brain, pituitary gland)"/>
</dbReference>
<dbReference type="MalaCards" id="SLC6A17"/>
<dbReference type="MIM" id="610299">
    <property type="type" value="gene"/>
</dbReference>
<dbReference type="MIM" id="616269">
    <property type="type" value="phenotype"/>
</dbReference>
<dbReference type="neXtProt" id="NX_Q9H1V8"/>
<dbReference type="OpenTargets" id="ENSG00000197106"/>
<dbReference type="Orphanet" id="457212">
    <property type="disease" value="Progressive essential tremor-speech impairment-facial dysmorphism-intellectual disability-abnormal behavior syndrome"/>
</dbReference>
<dbReference type="PharmGKB" id="PA134941636"/>
<dbReference type="VEuPathDB" id="HostDB:ENSG00000197106"/>
<dbReference type="eggNOG" id="KOG3659">
    <property type="taxonomic scope" value="Eukaryota"/>
</dbReference>
<dbReference type="GeneTree" id="ENSGT00940000156542"/>
<dbReference type="HOGENOM" id="CLU_006855_7_1_1"/>
<dbReference type="InParanoid" id="Q9H1V8"/>
<dbReference type="OMA" id="DYTEMYK"/>
<dbReference type="OrthoDB" id="6581954at2759"/>
<dbReference type="PAN-GO" id="Q9H1V8">
    <property type="GO annotations" value="7 GO annotations based on evolutionary models"/>
</dbReference>
<dbReference type="PhylomeDB" id="Q9H1V8"/>
<dbReference type="TreeFam" id="TF352709"/>
<dbReference type="PathwayCommons" id="Q9H1V8"/>
<dbReference type="SignaLink" id="Q9H1V8"/>
<dbReference type="BioGRID-ORCS" id="388662">
    <property type="hits" value="20 hits in 1140 CRISPR screens"/>
</dbReference>
<dbReference type="GenomeRNAi" id="388662"/>
<dbReference type="Pharos" id="Q9H1V8">
    <property type="development level" value="Tbio"/>
</dbReference>
<dbReference type="PRO" id="PR:Q9H1V8"/>
<dbReference type="Proteomes" id="UP000005640">
    <property type="component" value="Chromosome 1"/>
</dbReference>
<dbReference type="RNAct" id="Q9H1V8">
    <property type="molecule type" value="protein"/>
</dbReference>
<dbReference type="Bgee" id="ENSG00000197106">
    <property type="expression patterns" value="Expressed in right frontal lobe and 131 other cell types or tissues"/>
</dbReference>
<dbReference type="GO" id="GO:0042995">
    <property type="term" value="C:cell projection"/>
    <property type="evidence" value="ECO:0007669"/>
    <property type="project" value="UniProtKB-KW"/>
</dbReference>
<dbReference type="GO" id="GO:0098982">
    <property type="term" value="C:GABA-ergic synapse"/>
    <property type="evidence" value="ECO:0007669"/>
    <property type="project" value="Ensembl"/>
</dbReference>
<dbReference type="GO" id="GO:0098978">
    <property type="term" value="C:glutamatergic synapse"/>
    <property type="evidence" value="ECO:0007669"/>
    <property type="project" value="Ensembl"/>
</dbReference>
<dbReference type="GO" id="GO:0016020">
    <property type="term" value="C:membrane"/>
    <property type="evidence" value="ECO:0000318"/>
    <property type="project" value="GO_Central"/>
</dbReference>
<dbReference type="GO" id="GO:0005886">
    <property type="term" value="C:plasma membrane"/>
    <property type="evidence" value="ECO:0007669"/>
    <property type="project" value="InterPro"/>
</dbReference>
<dbReference type="GO" id="GO:0098794">
    <property type="term" value="C:postsynapse"/>
    <property type="evidence" value="ECO:0007669"/>
    <property type="project" value="UniProtKB-SubCell"/>
</dbReference>
<dbReference type="GO" id="GO:0008021">
    <property type="term" value="C:synaptic vesicle"/>
    <property type="evidence" value="ECO:0000250"/>
    <property type="project" value="UniProtKB"/>
</dbReference>
<dbReference type="GO" id="GO:0030672">
    <property type="term" value="C:synaptic vesicle membrane"/>
    <property type="evidence" value="ECO:0007669"/>
    <property type="project" value="UniProtKB-SubCell"/>
</dbReference>
<dbReference type="GO" id="GO:0015293">
    <property type="term" value="F:symporter activity"/>
    <property type="evidence" value="ECO:0007669"/>
    <property type="project" value="UniProtKB-KW"/>
</dbReference>
<dbReference type="GO" id="GO:0032328">
    <property type="term" value="P:alanine transport"/>
    <property type="evidence" value="ECO:0000250"/>
    <property type="project" value="UniProtKB"/>
</dbReference>
<dbReference type="GO" id="GO:0007420">
    <property type="term" value="P:brain development"/>
    <property type="evidence" value="ECO:0000250"/>
    <property type="project" value="UniProtKB"/>
</dbReference>
<dbReference type="GO" id="GO:0015816">
    <property type="term" value="P:glycine transport"/>
    <property type="evidence" value="ECO:0000250"/>
    <property type="project" value="UniProtKB"/>
</dbReference>
<dbReference type="GO" id="GO:0015820">
    <property type="term" value="P:L-leucine transport"/>
    <property type="evidence" value="ECO:0000250"/>
    <property type="project" value="UniProtKB"/>
</dbReference>
<dbReference type="GO" id="GO:0006836">
    <property type="term" value="P:neurotransmitter transport"/>
    <property type="evidence" value="ECO:0007669"/>
    <property type="project" value="UniProtKB-KW"/>
</dbReference>
<dbReference type="GO" id="GO:0015804">
    <property type="term" value="P:neutral amino acid transport"/>
    <property type="evidence" value="ECO:0000250"/>
    <property type="project" value="UniProtKB"/>
</dbReference>
<dbReference type="GO" id="GO:0015824">
    <property type="term" value="P:proline transport"/>
    <property type="evidence" value="ECO:0000250"/>
    <property type="project" value="UniProtKB"/>
</dbReference>
<dbReference type="GO" id="GO:0030163">
    <property type="term" value="P:protein catabolic process"/>
    <property type="evidence" value="ECO:0007669"/>
    <property type="project" value="Ensembl"/>
</dbReference>
<dbReference type="GO" id="GO:0035725">
    <property type="term" value="P:sodium ion transmembrane transport"/>
    <property type="evidence" value="ECO:0000318"/>
    <property type="project" value="GO_Central"/>
</dbReference>
<dbReference type="GO" id="GO:0150104">
    <property type="term" value="P:transport across blood-brain barrier"/>
    <property type="evidence" value="ECO:0000303"/>
    <property type="project" value="ARUK-UCL"/>
</dbReference>
<dbReference type="CDD" id="cd11521">
    <property type="entry name" value="SLC6sbd_NTT4"/>
    <property type="match status" value="1"/>
</dbReference>
<dbReference type="InterPro" id="IPR000175">
    <property type="entry name" value="Na/ntran_symport"/>
</dbReference>
<dbReference type="InterPro" id="IPR002438">
    <property type="entry name" value="Neutral_aa_SLC6"/>
</dbReference>
<dbReference type="InterPro" id="IPR037272">
    <property type="entry name" value="SNS_sf"/>
</dbReference>
<dbReference type="NCBIfam" id="NF037979">
    <property type="entry name" value="Na_transp"/>
    <property type="match status" value="1"/>
</dbReference>
<dbReference type="PANTHER" id="PTHR11616:SF102">
    <property type="entry name" value="SODIUM-DEPENDENT NEUTRAL AMINO ACID TRANSPORTER SLC6A17"/>
    <property type="match status" value="1"/>
</dbReference>
<dbReference type="PANTHER" id="PTHR11616">
    <property type="entry name" value="SODIUM/CHLORIDE DEPENDENT TRANSPORTER"/>
    <property type="match status" value="1"/>
</dbReference>
<dbReference type="Pfam" id="PF00209">
    <property type="entry name" value="SNF"/>
    <property type="match status" value="1"/>
</dbReference>
<dbReference type="PRINTS" id="PR00176">
    <property type="entry name" value="NANEUSMPORT"/>
</dbReference>
<dbReference type="PRINTS" id="PR01206">
    <property type="entry name" value="ORPHTRNSPORT"/>
</dbReference>
<dbReference type="SUPFAM" id="SSF161070">
    <property type="entry name" value="SNF-like"/>
    <property type="match status" value="1"/>
</dbReference>
<dbReference type="PROSITE" id="PS00610">
    <property type="entry name" value="NA_NEUROTRAN_SYMP_1"/>
    <property type="match status" value="1"/>
</dbReference>
<dbReference type="PROSITE" id="PS00754">
    <property type="entry name" value="NA_NEUROTRAN_SYMP_2"/>
    <property type="match status" value="1"/>
</dbReference>
<dbReference type="PROSITE" id="PS50267">
    <property type="entry name" value="NA_NEUROTRAN_SYMP_3"/>
    <property type="match status" value="1"/>
</dbReference>
<proteinExistence type="evidence at protein level"/>
<accession>Q9H1V8</accession>
<accession>A6NEA8</accession>
<accession>A8K1R7</accession>
<accession>B9EIR5</accession>
<accession>Q5T5Q9</accession>
<protein>
    <recommendedName>
        <fullName>Sodium-dependent neutral amino acid transporter SLC6A17</fullName>
    </recommendedName>
    <alternativeName>
        <fullName>Sodium-dependent neurotransmitter transporter NTT4</fullName>
    </alternativeName>
    <alternativeName>
        <fullName>Solute carrier family 6 member 17</fullName>
    </alternativeName>
</protein>
<feature type="chain" id="PRO_0000214803" description="Sodium-dependent neutral amino acid transporter SLC6A17">
    <location>
        <begin position="1"/>
        <end position="727"/>
    </location>
</feature>
<feature type="topological domain" description="Cytoplasmic" evidence="3">
    <location>
        <begin position="1"/>
        <end position="69"/>
    </location>
</feature>
<feature type="transmembrane region" description="Helical; Name=1" evidence="3">
    <location>
        <begin position="70"/>
        <end position="90"/>
    </location>
</feature>
<feature type="topological domain" description="Extracellular" evidence="3">
    <location>
        <begin position="91"/>
        <end position="95"/>
    </location>
</feature>
<feature type="transmembrane region" description="Helical; Name=2" evidence="3">
    <location>
        <begin position="96"/>
        <end position="116"/>
    </location>
</feature>
<feature type="topological domain" description="Cytoplasmic" evidence="3">
    <location>
        <begin position="117"/>
        <end position="147"/>
    </location>
</feature>
<feature type="transmembrane region" description="Helical; Name=3" evidence="3">
    <location>
        <begin position="148"/>
        <end position="168"/>
    </location>
</feature>
<feature type="topological domain" description="Extracellular" evidence="3">
    <location>
        <begin position="169"/>
        <end position="222"/>
    </location>
</feature>
<feature type="transmembrane region" description="Helical; Name=4" evidence="3">
    <location>
        <begin position="223"/>
        <end position="243"/>
    </location>
</feature>
<feature type="topological domain" description="Cytoplasmic" evidence="3">
    <location>
        <begin position="244"/>
        <end position="253"/>
    </location>
</feature>
<feature type="transmembrane region" description="Helical; Name=5" evidence="3">
    <location>
        <begin position="254"/>
        <end position="274"/>
    </location>
</feature>
<feature type="topological domain" description="Extracellular" evidence="3">
    <location>
        <begin position="275"/>
        <end position="300"/>
    </location>
</feature>
<feature type="transmembrane region" description="Helical; Name=6" evidence="3">
    <location>
        <begin position="301"/>
        <end position="321"/>
    </location>
</feature>
<feature type="topological domain" description="Cytoplasmic" evidence="3">
    <location>
        <begin position="322"/>
        <end position="334"/>
    </location>
</feature>
<feature type="transmembrane region" description="Helical; Name=7" evidence="3">
    <location>
        <begin position="335"/>
        <end position="355"/>
    </location>
</feature>
<feature type="topological domain" description="Extracellular" evidence="3">
    <location>
        <begin position="356"/>
        <end position="460"/>
    </location>
</feature>
<feature type="transmembrane region" description="Helical; Name=8" evidence="3">
    <location>
        <begin position="461"/>
        <end position="481"/>
    </location>
</feature>
<feature type="topological domain" description="Cytoplasmic" evidence="3">
    <location>
        <begin position="482"/>
        <end position="490"/>
    </location>
</feature>
<feature type="transmembrane region" description="Helical; Name=9" evidence="3">
    <location>
        <begin position="491"/>
        <end position="511"/>
    </location>
</feature>
<feature type="topological domain" description="Extracellular" evidence="3">
    <location>
        <begin position="512"/>
        <end position="527"/>
    </location>
</feature>
<feature type="transmembrane region" description="Helical; Name=10" evidence="3">
    <location>
        <begin position="528"/>
        <end position="548"/>
    </location>
</feature>
<feature type="topological domain" description="Cytoplasmic" evidence="3">
    <location>
        <begin position="549"/>
        <end position="573"/>
    </location>
</feature>
<feature type="transmembrane region" description="Helical; Name=11" evidence="3">
    <location>
        <begin position="574"/>
        <end position="594"/>
    </location>
</feature>
<feature type="topological domain" description="Extracellular" evidence="3">
    <location>
        <begin position="595"/>
        <end position="617"/>
    </location>
</feature>
<feature type="transmembrane region" description="Helical; Name=12" evidence="3">
    <location>
        <begin position="618"/>
        <end position="638"/>
    </location>
</feature>
<feature type="topological domain" description="Cytoplasmic" evidence="3">
    <location>
        <begin position="639"/>
        <end position="727"/>
    </location>
</feature>
<feature type="region of interest" description="Disordered" evidence="4">
    <location>
        <begin position="680"/>
        <end position="727"/>
    </location>
</feature>
<feature type="compositionally biased region" description="Polar residues" evidence="4">
    <location>
        <begin position="698"/>
        <end position="709"/>
    </location>
</feature>
<feature type="modified residue" description="Phosphoserine" evidence="2">
    <location>
        <position position="13"/>
    </location>
</feature>
<feature type="modified residue" description="Phosphoserine" evidence="2">
    <location>
        <position position="20"/>
    </location>
</feature>
<feature type="modified residue" description="Phosphotyrosine" evidence="2">
    <location>
        <position position="377"/>
    </location>
</feature>
<feature type="modified residue" description="Phosphoserine" evidence="2">
    <location>
        <position position="665"/>
    </location>
</feature>
<feature type="modified residue" description="Phosphoserine" evidence="1">
    <location>
        <position position="701"/>
    </location>
</feature>
<feature type="glycosylation site" description="N-linked (GlcNAc...) asparagine" evidence="3">
    <location>
        <position position="186"/>
    </location>
</feature>
<feature type="glycosylation site" description="N-linked (GlcNAc...) asparagine" evidence="3">
    <location>
        <position position="393"/>
    </location>
</feature>
<feature type="sequence variant" id="VAR_061814" description="In dbSNP:rs12737742." evidence="5">
    <original>A</original>
    <variation>T</variation>
    <location>
        <position position="57"/>
    </location>
</feature>
<feature type="sequence variant" id="VAR_073371" description="In MRT48; dbSNP:rs775085213." evidence="6">
    <original>G</original>
    <variation>R</variation>
    <location>
        <position position="162"/>
    </location>
</feature>
<feature type="sequence variant" id="VAR_073372" description="In MRT48; dbSNP:rs375380880." evidence="6">
    <original>P</original>
    <variation>R</variation>
    <location>
        <position position="633"/>
    </location>
</feature>
<gene>
    <name evidence="1 8" type="primary">SLC6A17</name>
    <name evidence="1" type="synonym">NTT4</name>
</gene>
<evidence type="ECO:0000250" key="1">
    <source>
        <dbReference type="UniProtKB" id="P31662"/>
    </source>
</evidence>
<evidence type="ECO:0000250" key="2">
    <source>
        <dbReference type="UniProtKB" id="Q8BJI1"/>
    </source>
</evidence>
<evidence type="ECO:0000255" key="3"/>
<evidence type="ECO:0000256" key="4">
    <source>
        <dbReference type="SAM" id="MobiDB-lite"/>
    </source>
</evidence>
<evidence type="ECO:0000269" key="5">
    <source>
    </source>
</evidence>
<evidence type="ECO:0000269" key="6">
    <source>
    </source>
</evidence>
<evidence type="ECO:0000305" key="7"/>
<evidence type="ECO:0000312" key="8">
    <source>
        <dbReference type="HGNC" id="HGNC:31399"/>
    </source>
</evidence>
<reference key="1">
    <citation type="journal article" date="2004" name="Nat. Genet.">
        <title>Complete sequencing and characterization of 21,243 full-length human cDNAs.</title>
        <authorList>
            <person name="Ota T."/>
            <person name="Suzuki Y."/>
            <person name="Nishikawa T."/>
            <person name="Otsuki T."/>
            <person name="Sugiyama T."/>
            <person name="Irie R."/>
            <person name="Wakamatsu A."/>
            <person name="Hayashi K."/>
            <person name="Sato H."/>
            <person name="Nagai K."/>
            <person name="Kimura K."/>
            <person name="Makita H."/>
            <person name="Sekine M."/>
            <person name="Obayashi M."/>
            <person name="Nishi T."/>
            <person name="Shibahara T."/>
            <person name="Tanaka T."/>
            <person name="Ishii S."/>
            <person name="Yamamoto J."/>
            <person name="Saito K."/>
            <person name="Kawai Y."/>
            <person name="Isono Y."/>
            <person name="Nakamura Y."/>
            <person name="Nagahari K."/>
            <person name="Murakami K."/>
            <person name="Yasuda T."/>
            <person name="Iwayanagi T."/>
            <person name="Wagatsuma M."/>
            <person name="Shiratori A."/>
            <person name="Sudo H."/>
            <person name="Hosoiri T."/>
            <person name="Kaku Y."/>
            <person name="Kodaira H."/>
            <person name="Kondo H."/>
            <person name="Sugawara M."/>
            <person name="Takahashi M."/>
            <person name="Kanda K."/>
            <person name="Yokoi T."/>
            <person name="Furuya T."/>
            <person name="Kikkawa E."/>
            <person name="Omura Y."/>
            <person name="Abe K."/>
            <person name="Kamihara K."/>
            <person name="Katsuta N."/>
            <person name="Sato K."/>
            <person name="Tanikawa M."/>
            <person name="Yamazaki M."/>
            <person name="Ninomiya K."/>
            <person name="Ishibashi T."/>
            <person name="Yamashita H."/>
            <person name="Murakawa K."/>
            <person name="Fujimori K."/>
            <person name="Tanai H."/>
            <person name="Kimata M."/>
            <person name="Watanabe M."/>
            <person name="Hiraoka S."/>
            <person name="Chiba Y."/>
            <person name="Ishida S."/>
            <person name="Ono Y."/>
            <person name="Takiguchi S."/>
            <person name="Watanabe S."/>
            <person name="Yosida M."/>
            <person name="Hotuta T."/>
            <person name="Kusano J."/>
            <person name="Kanehori K."/>
            <person name="Takahashi-Fujii A."/>
            <person name="Hara H."/>
            <person name="Tanase T.-O."/>
            <person name="Nomura Y."/>
            <person name="Togiya S."/>
            <person name="Komai F."/>
            <person name="Hara R."/>
            <person name="Takeuchi K."/>
            <person name="Arita M."/>
            <person name="Imose N."/>
            <person name="Musashino K."/>
            <person name="Yuuki H."/>
            <person name="Oshima A."/>
            <person name="Sasaki N."/>
            <person name="Aotsuka S."/>
            <person name="Yoshikawa Y."/>
            <person name="Matsunawa H."/>
            <person name="Ichihara T."/>
            <person name="Shiohata N."/>
            <person name="Sano S."/>
            <person name="Moriya S."/>
            <person name="Momiyama H."/>
            <person name="Satoh N."/>
            <person name="Takami S."/>
            <person name="Terashima Y."/>
            <person name="Suzuki O."/>
            <person name="Nakagawa S."/>
            <person name="Senoh A."/>
            <person name="Mizoguchi H."/>
            <person name="Goto Y."/>
            <person name="Shimizu F."/>
            <person name="Wakebe H."/>
            <person name="Hishigaki H."/>
            <person name="Watanabe T."/>
            <person name="Sugiyama A."/>
            <person name="Takemoto M."/>
            <person name="Kawakami B."/>
            <person name="Yamazaki M."/>
            <person name="Watanabe K."/>
            <person name="Kumagai A."/>
            <person name="Itakura S."/>
            <person name="Fukuzumi Y."/>
            <person name="Fujimori Y."/>
            <person name="Komiyama M."/>
            <person name="Tashiro H."/>
            <person name="Tanigami A."/>
            <person name="Fujiwara T."/>
            <person name="Ono T."/>
            <person name="Yamada K."/>
            <person name="Fujii Y."/>
            <person name="Ozaki K."/>
            <person name="Hirao M."/>
            <person name="Ohmori Y."/>
            <person name="Kawabata A."/>
            <person name="Hikiji T."/>
            <person name="Kobatake N."/>
            <person name="Inagaki H."/>
            <person name="Ikema Y."/>
            <person name="Okamoto S."/>
            <person name="Okitani R."/>
            <person name="Kawakami T."/>
            <person name="Noguchi S."/>
            <person name="Itoh T."/>
            <person name="Shigeta K."/>
            <person name="Senba T."/>
            <person name="Matsumura K."/>
            <person name="Nakajima Y."/>
            <person name="Mizuno T."/>
            <person name="Morinaga M."/>
            <person name="Sasaki M."/>
            <person name="Togashi T."/>
            <person name="Oyama M."/>
            <person name="Hata H."/>
            <person name="Watanabe M."/>
            <person name="Komatsu T."/>
            <person name="Mizushima-Sugano J."/>
            <person name="Satoh T."/>
            <person name="Shirai Y."/>
            <person name="Takahashi Y."/>
            <person name="Nakagawa K."/>
            <person name="Okumura K."/>
            <person name="Nagase T."/>
            <person name="Nomura N."/>
            <person name="Kikuchi H."/>
            <person name="Masuho Y."/>
            <person name="Yamashita R."/>
            <person name="Nakai K."/>
            <person name="Yada T."/>
            <person name="Nakamura Y."/>
            <person name="Ohara O."/>
            <person name="Isogai T."/>
            <person name="Sugano S."/>
        </authorList>
    </citation>
    <scope>NUCLEOTIDE SEQUENCE [LARGE SCALE MRNA]</scope>
    <source>
        <tissue>Hippocampus</tissue>
    </source>
</reference>
<reference key="2">
    <citation type="journal article" date="2006" name="Nature">
        <title>The DNA sequence and biological annotation of human chromosome 1.</title>
        <authorList>
            <person name="Gregory S.G."/>
            <person name="Barlow K.F."/>
            <person name="McLay K.E."/>
            <person name="Kaul R."/>
            <person name="Swarbreck D."/>
            <person name="Dunham A."/>
            <person name="Scott C.E."/>
            <person name="Howe K.L."/>
            <person name="Woodfine K."/>
            <person name="Spencer C.C.A."/>
            <person name="Jones M.C."/>
            <person name="Gillson C."/>
            <person name="Searle S."/>
            <person name="Zhou Y."/>
            <person name="Kokocinski F."/>
            <person name="McDonald L."/>
            <person name="Evans R."/>
            <person name="Phillips K."/>
            <person name="Atkinson A."/>
            <person name="Cooper R."/>
            <person name="Jones C."/>
            <person name="Hall R.E."/>
            <person name="Andrews T.D."/>
            <person name="Lloyd C."/>
            <person name="Ainscough R."/>
            <person name="Almeida J.P."/>
            <person name="Ambrose K.D."/>
            <person name="Anderson F."/>
            <person name="Andrew R.W."/>
            <person name="Ashwell R.I.S."/>
            <person name="Aubin K."/>
            <person name="Babbage A.K."/>
            <person name="Bagguley C.L."/>
            <person name="Bailey J."/>
            <person name="Beasley H."/>
            <person name="Bethel G."/>
            <person name="Bird C.P."/>
            <person name="Bray-Allen S."/>
            <person name="Brown J.Y."/>
            <person name="Brown A.J."/>
            <person name="Buckley D."/>
            <person name="Burton J."/>
            <person name="Bye J."/>
            <person name="Carder C."/>
            <person name="Chapman J.C."/>
            <person name="Clark S.Y."/>
            <person name="Clarke G."/>
            <person name="Clee C."/>
            <person name="Cobley V."/>
            <person name="Collier R.E."/>
            <person name="Corby N."/>
            <person name="Coville G.J."/>
            <person name="Davies J."/>
            <person name="Deadman R."/>
            <person name="Dunn M."/>
            <person name="Earthrowl M."/>
            <person name="Ellington A.G."/>
            <person name="Errington H."/>
            <person name="Frankish A."/>
            <person name="Frankland J."/>
            <person name="French L."/>
            <person name="Garner P."/>
            <person name="Garnett J."/>
            <person name="Gay L."/>
            <person name="Ghori M.R.J."/>
            <person name="Gibson R."/>
            <person name="Gilby L.M."/>
            <person name="Gillett W."/>
            <person name="Glithero R.J."/>
            <person name="Grafham D.V."/>
            <person name="Griffiths C."/>
            <person name="Griffiths-Jones S."/>
            <person name="Grocock R."/>
            <person name="Hammond S."/>
            <person name="Harrison E.S.I."/>
            <person name="Hart E."/>
            <person name="Haugen E."/>
            <person name="Heath P.D."/>
            <person name="Holmes S."/>
            <person name="Holt K."/>
            <person name="Howden P.J."/>
            <person name="Hunt A.R."/>
            <person name="Hunt S.E."/>
            <person name="Hunter G."/>
            <person name="Isherwood J."/>
            <person name="James R."/>
            <person name="Johnson C."/>
            <person name="Johnson D."/>
            <person name="Joy A."/>
            <person name="Kay M."/>
            <person name="Kershaw J.K."/>
            <person name="Kibukawa M."/>
            <person name="Kimberley A.M."/>
            <person name="King A."/>
            <person name="Knights A.J."/>
            <person name="Lad H."/>
            <person name="Laird G."/>
            <person name="Lawlor S."/>
            <person name="Leongamornlert D.A."/>
            <person name="Lloyd D.M."/>
            <person name="Loveland J."/>
            <person name="Lovell J."/>
            <person name="Lush M.J."/>
            <person name="Lyne R."/>
            <person name="Martin S."/>
            <person name="Mashreghi-Mohammadi M."/>
            <person name="Matthews L."/>
            <person name="Matthews N.S.W."/>
            <person name="McLaren S."/>
            <person name="Milne S."/>
            <person name="Mistry S."/>
            <person name="Moore M.J.F."/>
            <person name="Nickerson T."/>
            <person name="O'Dell C.N."/>
            <person name="Oliver K."/>
            <person name="Palmeiri A."/>
            <person name="Palmer S.A."/>
            <person name="Parker A."/>
            <person name="Patel D."/>
            <person name="Pearce A.V."/>
            <person name="Peck A.I."/>
            <person name="Pelan S."/>
            <person name="Phelps K."/>
            <person name="Phillimore B.J."/>
            <person name="Plumb R."/>
            <person name="Rajan J."/>
            <person name="Raymond C."/>
            <person name="Rouse G."/>
            <person name="Saenphimmachak C."/>
            <person name="Sehra H.K."/>
            <person name="Sheridan E."/>
            <person name="Shownkeen R."/>
            <person name="Sims S."/>
            <person name="Skuce C.D."/>
            <person name="Smith M."/>
            <person name="Steward C."/>
            <person name="Subramanian S."/>
            <person name="Sycamore N."/>
            <person name="Tracey A."/>
            <person name="Tromans A."/>
            <person name="Van Helmond Z."/>
            <person name="Wall M."/>
            <person name="Wallis J.M."/>
            <person name="White S."/>
            <person name="Whitehead S.L."/>
            <person name="Wilkinson J.E."/>
            <person name="Willey D.L."/>
            <person name="Williams H."/>
            <person name="Wilming L."/>
            <person name="Wray P.W."/>
            <person name="Wu Z."/>
            <person name="Coulson A."/>
            <person name="Vaudin M."/>
            <person name="Sulston J.E."/>
            <person name="Durbin R.M."/>
            <person name="Hubbard T."/>
            <person name="Wooster R."/>
            <person name="Dunham I."/>
            <person name="Carter N.P."/>
            <person name="McVean G."/>
            <person name="Ross M.T."/>
            <person name="Harrow J."/>
            <person name="Olson M.V."/>
            <person name="Beck S."/>
            <person name="Rogers J."/>
            <person name="Bentley D.R."/>
        </authorList>
    </citation>
    <scope>NUCLEOTIDE SEQUENCE [LARGE SCALE GENOMIC DNA]</scope>
</reference>
<reference key="3">
    <citation type="journal article" date="2004" name="Genome Res.">
        <title>The status, quality, and expansion of the NIH full-length cDNA project: the Mammalian Gene Collection (MGC).</title>
        <authorList>
            <consortium name="The MGC Project Team"/>
        </authorList>
    </citation>
    <scope>NUCLEOTIDE SEQUENCE [LARGE SCALE MRNA]</scope>
    <scope>VARIANT THR-57</scope>
    <source>
        <tissue>Brain</tissue>
    </source>
</reference>
<reference key="4">
    <citation type="journal article" date="2005" name="Biochem. Biophys. Res. Commun.">
        <title>The repertoire of solute carriers of family 6: identification of new human and rodent genes.</title>
        <authorList>
            <person name="Hoglund P.J."/>
            <person name="Adzic D."/>
            <person name="Scicluna S.J."/>
            <person name="Lindblom J."/>
            <person name="Fredriksson R."/>
        </authorList>
    </citation>
    <scope>IDENTIFICATION</scope>
</reference>
<reference key="5">
    <citation type="journal article" date="2015" name="Am. J. Hum. Genet.">
        <title>Homozygous SLC6A17 mutations cause autosomal-recessive intellectual disability with progressive tremor, speech impairment, and behavioral problems.</title>
        <authorList>
            <person name="Iqbal Z."/>
            <person name="Willemsen M.H."/>
            <person name="Papon M.A."/>
            <person name="Musante L."/>
            <person name="Benevento M."/>
            <person name="Hu H."/>
            <person name="Venselaar H."/>
            <person name="Wissink-Lindhout W.M."/>
            <person name="Vulto-van Silfhout A.T."/>
            <person name="Vissers L.E."/>
            <person name="de Brouwer A.P."/>
            <person name="Marouillat S."/>
            <person name="Wienker T.F."/>
            <person name="Ropers H.H."/>
            <person name="Kahrizi K."/>
            <person name="Nadif Kasri N."/>
            <person name="Najmabadi H."/>
            <person name="Laumonnier F."/>
            <person name="Kleefstra T."/>
            <person name="van Bokhoven H."/>
        </authorList>
    </citation>
    <scope>INVOLVEMENT IN MRT48</scope>
    <scope>VARIANTS MRT48 ARG-162 AND ARG-633</scope>
</reference>
<comment type="function">
    <text evidence="1">Synaptic vesicle transporter with apparent selectivity for neutral amino acids. The transport is sodium-coupled but chloride-independent, likely driven by the proton electrochemical gradient generated by vacuolar H(+)-ATPase in an overall electrogenic mechanism. May contribute to the synaptic uptake of neurotransmitter precursors in a process coupled in part to vesicle exocytosis.</text>
</comment>
<comment type="catalytic activity">
    <reaction evidence="1">
        <text>L-proline(in) + Na(+)(in) = L-proline(out) + Na(+)(out)</text>
        <dbReference type="Rhea" id="RHEA:28967"/>
        <dbReference type="ChEBI" id="CHEBI:29101"/>
        <dbReference type="ChEBI" id="CHEBI:60039"/>
    </reaction>
</comment>
<comment type="catalytic activity">
    <reaction evidence="1">
        <text>L-leucine(in) + Na(+)(in) = L-leucine(out) + Na(+)(out)</text>
        <dbReference type="Rhea" id="RHEA:29263"/>
        <dbReference type="ChEBI" id="CHEBI:29101"/>
        <dbReference type="ChEBI" id="CHEBI:57427"/>
    </reaction>
</comment>
<comment type="catalytic activity">
    <reaction evidence="1">
        <text>glycine(in) + Na(+)(in) = glycine(out) + Na(+)(out)</text>
        <dbReference type="Rhea" id="RHEA:68228"/>
        <dbReference type="ChEBI" id="CHEBI:29101"/>
        <dbReference type="ChEBI" id="CHEBI:57305"/>
    </reaction>
</comment>
<comment type="catalytic activity">
    <reaction evidence="1">
        <text>L-alanine(in) + Na(+)(in) = L-alanine(out) + Na(+)(out)</text>
        <dbReference type="Rhea" id="RHEA:29283"/>
        <dbReference type="ChEBI" id="CHEBI:29101"/>
        <dbReference type="ChEBI" id="CHEBI:57972"/>
    </reaction>
</comment>
<comment type="catalytic activity">
    <reaction evidence="1">
        <text>L-glutamine(in) + Na(+)(in) = L-glutamine(out) + Na(+)(out)</text>
        <dbReference type="Rhea" id="RHEA:68236"/>
        <dbReference type="ChEBI" id="CHEBI:29101"/>
        <dbReference type="ChEBI" id="CHEBI:58359"/>
    </reaction>
</comment>
<comment type="interaction">
    <interactant intactId="EBI-18396863">
        <id>Q9H1V8</id>
    </interactant>
    <interactant intactId="EBI-749464">
        <id>Q12983</id>
        <label>BNIP3</label>
    </interactant>
    <organismsDiffer>false</organismsDiffer>
    <experiments>3</experiments>
</comment>
<comment type="subcellular location">
    <subcellularLocation>
        <location evidence="1">Cytoplasmic vesicle</location>
        <location evidence="1">Secretory vesicle</location>
        <location evidence="1">Synaptic vesicle membrane</location>
        <topology evidence="1">Multi-pass membrane protein</topology>
    </subcellularLocation>
    <subcellularLocation>
        <location evidence="2">Postsynapse</location>
    </subcellularLocation>
    <subcellularLocation>
        <location evidence="2">Presynapse</location>
    </subcellularLocation>
    <text evidence="2">Localizes at synaptic junctions - at both pre- and post-synaptic sites - particularly in excitatory glutamatergic terminals.</text>
</comment>
<comment type="disease" evidence="6">
    <disease id="DI-04357">
        <name>Intellectual developmental disorder, autosomal recessive 48</name>
        <acronym>MRT48</acronym>
        <description>A disorder characterized by significantly below average general intellectual functioning associated with impairments in adaptive behavior and manifested during the developmental period. MRT48 patients show moderate to severe intellectual disability and additional features including progressive tremor, speech impairment, and sometimes behavioral problems.</description>
        <dbReference type="MIM" id="616269"/>
    </disease>
    <text>The disease is caused by variants affecting the gene represented in this entry.</text>
</comment>
<comment type="similarity">
    <text evidence="7">Belongs to the sodium:neurotransmitter symporter (SNF) (TC 2.A.22) family.</text>
</comment>
<sequence>MPKNSKVTQREHSSEHVTESVADLLALEEPVDYKQSVLNVAGEAGGKQKAVEEELDAEDRPAWNSKLQYILAQIGFSVGLGNIWRFPYLCQKNGGGAYLVPYLVLLIIIGIPLFFLELAVGQRIRRGSIGVWHYICPRLGGIGFSSCIVCLFVGLYYNVIIGWSIFYFFKSFQYPLPWSECPVVRNGSVAVVEAECEKSSATTYFWYREALDISDSISESGGLNWKMTLCLLVAWSIVGMAVVKGIQSSGKVMYFSSLFPYVVLACFLVRGLLLRGAVDGILHMFTPKLDKMLDPQVWREAATQVFFALGLGFGGVIAFSSYNKQDNNCHFDAALVSFINFFTSVLATLVVFAVLGFKANIMNEKCVVENAEKILGYLNTNVLSRDLIPPHVNFSHLTTKDYMEMYNVIMTVKEDQFSALGLDPCLLEDELDKSVQGTGLAFIAFTEAMTHFPASPFWSVMFFLMLINLGLGSMIGTMAGITTPIIDTFKVPKEMFTVGCCVFAFLVGLLFVQRSGNYFVTMFDDYSATLPLTLIVILENIAVAWIYGTKKFMQELTEMLGFRPYRFYFYMWKFVSPLCMAVLTTASIIQLGVTPPGYSAWIKEEAAERYLYFPNWAMALLITLIVVATLPIPVVFVLRHFHLLSDGSNTLSVSYKKGRMMKDISNLEENDETRFILSKVPSEAPSPMPTHRSYLGPGSTSPLETSGNPNGRYGSGYLLASTPESEL</sequence>
<keyword id="KW-0029">Amino-acid transport</keyword>
<keyword id="KW-0966">Cell projection</keyword>
<keyword id="KW-0968">Cytoplasmic vesicle</keyword>
<keyword id="KW-0225">Disease variant</keyword>
<keyword id="KW-0325">Glycoprotein</keyword>
<keyword id="KW-0991">Intellectual disability</keyword>
<keyword id="KW-0406">Ion transport</keyword>
<keyword id="KW-0472">Membrane</keyword>
<keyword id="KW-0532">Neurotransmitter transport</keyword>
<keyword id="KW-0597">Phosphoprotein</keyword>
<keyword id="KW-1267">Proteomics identification</keyword>
<keyword id="KW-1185">Reference proteome</keyword>
<keyword id="KW-0915">Sodium</keyword>
<keyword id="KW-0739">Sodium transport</keyword>
<keyword id="KW-0769">Symport</keyword>
<keyword id="KW-0770">Synapse</keyword>
<keyword id="KW-0812">Transmembrane</keyword>
<keyword id="KW-1133">Transmembrane helix</keyword>
<keyword id="KW-0813">Transport</keyword>
<organism>
    <name type="scientific">Homo sapiens</name>
    <name type="common">Human</name>
    <dbReference type="NCBI Taxonomy" id="9606"/>
    <lineage>
        <taxon>Eukaryota</taxon>
        <taxon>Metazoa</taxon>
        <taxon>Chordata</taxon>
        <taxon>Craniata</taxon>
        <taxon>Vertebrata</taxon>
        <taxon>Euteleostomi</taxon>
        <taxon>Mammalia</taxon>
        <taxon>Eutheria</taxon>
        <taxon>Euarchontoglires</taxon>
        <taxon>Primates</taxon>
        <taxon>Haplorrhini</taxon>
        <taxon>Catarrhini</taxon>
        <taxon>Hominidae</taxon>
        <taxon>Homo</taxon>
    </lineage>
</organism>